<comment type="function">
    <text evidence="1">Part of the ABC transporter complex MetNIQ involved in methionine import. Responsible for energy coupling to the transport system.</text>
</comment>
<comment type="catalytic activity">
    <reaction evidence="1">
        <text>L-methionine(out) + ATP + H2O = L-methionine(in) + ADP + phosphate + H(+)</text>
        <dbReference type="Rhea" id="RHEA:29779"/>
        <dbReference type="ChEBI" id="CHEBI:15377"/>
        <dbReference type="ChEBI" id="CHEBI:15378"/>
        <dbReference type="ChEBI" id="CHEBI:30616"/>
        <dbReference type="ChEBI" id="CHEBI:43474"/>
        <dbReference type="ChEBI" id="CHEBI:57844"/>
        <dbReference type="ChEBI" id="CHEBI:456216"/>
        <dbReference type="EC" id="7.4.2.11"/>
    </reaction>
</comment>
<comment type="catalytic activity">
    <reaction evidence="1">
        <text>D-methionine(out) + ATP + H2O = D-methionine(in) + ADP + phosphate + H(+)</text>
        <dbReference type="Rhea" id="RHEA:29767"/>
        <dbReference type="ChEBI" id="CHEBI:15377"/>
        <dbReference type="ChEBI" id="CHEBI:15378"/>
        <dbReference type="ChEBI" id="CHEBI:30616"/>
        <dbReference type="ChEBI" id="CHEBI:43474"/>
        <dbReference type="ChEBI" id="CHEBI:57932"/>
        <dbReference type="ChEBI" id="CHEBI:456216"/>
        <dbReference type="EC" id="7.4.2.11"/>
    </reaction>
</comment>
<comment type="subunit">
    <text evidence="1">The complex is composed of two ATP-binding proteins (MetN), two transmembrane proteins (MetI) and a solute-binding protein (MetQ).</text>
</comment>
<comment type="subcellular location">
    <subcellularLocation>
        <location evidence="1">Cell inner membrane</location>
        <topology evidence="1">Peripheral membrane protein</topology>
    </subcellularLocation>
</comment>
<comment type="similarity">
    <text evidence="1">Belongs to the ABC transporter superfamily. Methionine importer (TC 3.A.1.24) family.</text>
</comment>
<sequence>MIEINQVNKVFYQGSKEIHALKDINLHIAEGTIFGVIGSSGAGKSTLIRCVNMLEAPTSGSIVVDGVDLTKLSKKQLSETRRNIGMIFQHFNLLSSRTVFDNVALPLELAGKDKEQIQSKVTELLKLVGLADKHESYPANLSGGQKQRVAIARALASDPKVLLCDEATSALDPATTQSILELLKEINRKLKITILLITHEMDVVKSICHEVAIIGGGELVEKGTVGEIFAHPKTELAHDFIRSTLDLSIPEDYQVRLQPTRVAGSYPLVRLEFTGATVDAPLVSQISRKYNIDISILSSDLDYAGGVKFGMMVAELFGNEEDDNAAIEYLREHNVKVEVLGYVL</sequence>
<evidence type="ECO:0000255" key="1">
    <source>
        <dbReference type="HAMAP-Rule" id="MF_01719"/>
    </source>
</evidence>
<proteinExistence type="inferred from homology"/>
<dbReference type="EC" id="7.4.2.11" evidence="1"/>
<dbReference type="EMBL" id="AE016795">
    <property type="protein sequence ID" value="AAO08825.1"/>
    <property type="molecule type" value="Genomic_DNA"/>
</dbReference>
<dbReference type="RefSeq" id="WP_011078400.1">
    <property type="nucleotide sequence ID" value="NC_004459.3"/>
</dbReference>
<dbReference type="SMR" id="Q8DFC3"/>
<dbReference type="KEGG" id="vvu:VV1_0292"/>
<dbReference type="HOGENOM" id="CLU_000604_1_3_6"/>
<dbReference type="Proteomes" id="UP000002275">
    <property type="component" value="Chromosome 1"/>
</dbReference>
<dbReference type="GO" id="GO:0009276">
    <property type="term" value="C:Gram-negative-bacterium-type cell wall"/>
    <property type="evidence" value="ECO:0007669"/>
    <property type="project" value="InterPro"/>
</dbReference>
<dbReference type="GO" id="GO:0005886">
    <property type="term" value="C:plasma membrane"/>
    <property type="evidence" value="ECO:0007669"/>
    <property type="project" value="UniProtKB-SubCell"/>
</dbReference>
<dbReference type="GO" id="GO:0033232">
    <property type="term" value="F:ABC-type D-methionine transporter activity"/>
    <property type="evidence" value="ECO:0007669"/>
    <property type="project" value="UniProtKB-EC"/>
</dbReference>
<dbReference type="GO" id="GO:0005524">
    <property type="term" value="F:ATP binding"/>
    <property type="evidence" value="ECO:0007669"/>
    <property type="project" value="UniProtKB-KW"/>
</dbReference>
<dbReference type="GO" id="GO:0016887">
    <property type="term" value="F:ATP hydrolysis activity"/>
    <property type="evidence" value="ECO:0007669"/>
    <property type="project" value="InterPro"/>
</dbReference>
<dbReference type="CDD" id="cd03258">
    <property type="entry name" value="ABC_MetN_methionine_transporter"/>
    <property type="match status" value="1"/>
</dbReference>
<dbReference type="FunFam" id="3.40.50.300:FF:000233">
    <property type="entry name" value="Methionine import ATP-binding protein MetN"/>
    <property type="match status" value="1"/>
</dbReference>
<dbReference type="Gene3D" id="3.30.70.260">
    <property type="match status" value="1"/>
</dbReference>
<dbReference type="Gene3D" id="3.40.50.300">
    <property type="entry name" value="P-loop containing nucleotide triphosphate hydrolases"/>
    <property type="match status" value="1"/>
</dbReference>
<dbReference type="InterPro" id="IPR003593">
    <property type="entry name" value="AAA+_ATPase"/>
</dbReference>
<dbReference type="InterPro" id="IPR012692">
    <property type="entry name" value="ABC_MetN_proteobac"/>
</dbReference>
<dbReference type="InterPro" id="IPR003439">
    <property type="entry name" value="ABC_transporter-like_ATP-bd"/>
</dbReference>
<dbReference type="InterPro" id="IPR017871">
    <property type="entry name" value="ABC_transporter-like_CS"/>
</dbReference>
<dbReference type="InterPro" id="IPR045865">
    <property type="entry name" value="ACT-like_dom_sf"/>
</dbReference>
<dbReference type="InterPro" id="IPR041701">
    <property type="entry name" value="MetN_ABC"/>
</dbReference>
<dbReference type="InterPro" id="IPR050086">
    <property type="entry name" value="MetN_ABC_transporter-like"/>
</dbReference>
<dbReference type="InterPro" id="IPR018449">
    <property type="entry name" value="NIL_domain"/>
</dbReference>
<dbReference type="InterPro" id="IPR027417">
    <property type="entry name" value="P-loop_NTPase"/>
</dbReference>
<dbReference type="NCBIfam" id="TIGR02314">
    <property type="entry name" value="ABC_MetN"/>
    <property type="match status" value="1"/>
</dbReference>
<dbReference type="PANTHER" id="PTHR43166">
    <property type="entry name" value="AMINO ACID IMPORT ATP-BINDING PROTEIN"/>
    <property type="match status" value="1"/>
</dbReference>
<dbReference type="PANTHER" id="PTHR43166:SF30">
    <property type="entry name" value="METHIONINE IMPORT ATP-BINDING PROTEIN METN"/>
    <property type="match status" value="1"/>
</dbReference>
<dbReference type="Pfam" id="PF00005">
    <property type="entry name" value="ABC_tran"/>
    <property type="match status" value="1"/>
</dbReference>
<dbReference type="Pfam" id="PF09383">
    <property type="entry name" value="NIL"/>
    <property type="match status" value="1"/>
</dbReference>
<dbReference type="SMART" id="SM00382">
    <property type="entry name" value="AAA"/>
    <property type="match status" value="1"/>
</dbReference>
<dbReference type="SMART" id="SM00930">
    <property type="entry name" value="NIL"/>
    <property type="match status" value="1"/>
</dbReference>
<dbReference type="SUPFAM" id="SSF55021">
    <property type="entry name" value="ACT-like"/>
    <property type="match status" value="1"/>
</dbReference>
<dbReference type="SUPFAM" id="SSF52540">
    <property type="entry name" value="P-loop containing nucleoside triphosphate hydrolases"/>
    <property type="match status" value="1"/>
</dbReference>
<dbReference type="PROSITE" id="PS00211">
    <property type="entry name" value="ABC_TRANSPORTER_1"/>
    <property type="match status" value="1"/>
</dbReference>
<dbReference type="PROSITE" id="PS50893">
    <property type="entry name" value="ABC_TRANSPORTER_2"/>
    <property type="match status" value="1"/>
</dbReference>
<dbReference type="PROSITE" id="PS51264">
    <property type="entry name" value="METN"/>
    <property type="match status" value="1"/>
</dbReference>
<gene>
    <name evidence="1" type="primary">metN</name>
    <name type="ordered locus">VV1_0292</name>
</gene>
<feature type="chain" id="PRO_0000270436" description="Methionine import ATP-binding protein MetN">
    <location>
        <begin position="1"/>
        <end position="344"/>
    </location>
</feature>
<feature type="domain" description="ABC transporter" evidence="1">
    <location>
        <begin position="2"/>
        <end position="241"/>
    </location>
</feature>
<feature type="binding site" evidence="1">
    <location>
        <begin position="38"/>
        <end position="45"/>
    </location>
    <ligand>
        <name>ATP</name>
        <dbReference type="ChEBI" id="CHEBI:30616"/>
    </ligand>
</feature>
<reference key="1">
    <citation type="submission" date="2002-12" db="EMBL/GenBank/DDBJ databases">
        <title>Complete genome sequence of Vibrio vulnificus CMCP6.</title>
        <authorList>
            <person name="Rhee J.H."/>
            <person name="Kim S.Y."/>
            <person name="Chung S.S."/>
            <person name="Kim J.J."/>
            <person name="Moon Y.H."/>
            <person name="Jeong H."/>
            <person name="Choy H.E."/>
        </authorList>
    </citation>
    <scope>NUCLEOTIDE SEQUENCE [LARGE SCALE GENOMIC DNA]</scope>
    <source>
        <strain>CMCP6</strain>
    </source>
</reference>
<accession>Q8DFC3</accession>
<keyword id="KW-0029">Amino-acid transport</keyword>
<keyword id="KW-0067">ATP-binding</keyword>
<keyword id="KW-0997">Cell inner membrane</keyword>
<keyword id="KW-1003">Cell membrane</keyword>
<keyword id="KW-0472">Membrane</keyword>
<keyword id="KW-0547">Nucleotide-binding</keyword>
<keyword id="KW-1278">Translocase</keyword>
<keyword id="KW-0813">Transport</keyword>
<protein>
    <recommendedName>
        <fullName evidence="1">Methionine import ATP-binding protein MetN</fullName>
        <ecNumber evidence="1">7.4.2.11</ecNumber>
    </recommendedName>
</protein>
<name>METN_VIBVU</name>
<organism>
    <name type="scientific">Vibrio vulnificus (strain CMCP6)</name>
    <dbReference type="NCBI Taxonomy" id="216895"/>
    <lineage>
        <taxon>Bacteria</taxon>
        <taxon>Pseudomonadati</taxon>
        <taxon>Pseudomonadota</taxon>
        <taxon>Gammaproteobacteria</taxon>
        <taxon>Vibrionales</taxon>
        <taxon>Vibrionaceae</taxon>
        <taxon>Vibrio</taxon>
    </lineage>
</organism>